<accession>P06593</accession>
<proteinExistence type="evidence at protein level"/>
<feature type="initiator methionine" description="Removed" evidence="4">
    <location>
        <position position="1"/>
    </location>
</feature>
<feature type="chain" id="PRO_0000171967" description="Phytochrome A type 3">
    <location>
        <begin position="2"/>
        <end position="1129"/>
    </location>
</feature>
<feature type="domain" description="GAF">
    <location>
        <begin position="217"/>
        <end position="402"/>
    </location>
</feature>
<feature type="domain" description="PAS 1" evidence="2">
    <location>
        <begin position="618"/>
        <end position="688"/>
    </location>
</feature>
<feature type="domain" description="PAS 2" evidence="2">
    <location>
        <begin position="748"/>
        <end position="822"/>
    </location>
</feature>
<feature type="domain" description="Histidine kinase" evidence="1">
    <location>
        <begin position="902"/>
        <end position="1122"/>
    </location>
</feature>
<feature type="region of interest" description="Disordered" evidence="3">
    <location>
        <begin position="1"/>
        <end position="24"/>
    </location>
</feature>
<feature type="compositionally biased region" description="Low complexity" evidence="3">
    <location>
        <begin position="1"/>
        <end position="21"/>
    </location>
</feature>
<feature type="binding site" description="covalent">
    <location>
        <position position="322"/>
    </location>
    <ligand>
        <name>phytochromobilin</name>
        <dbReference type="ChEBI" id="CHEBI:189064"/>
    </ligand>
</feature>
<feature type="sequence conflict" description="In Ref. 2; AAA76820." evidence="5" ref="2">
    <original>L</original>
    <variation>F</variation>
    <location>
        <position position="279"/>
    </location>
</feature>
<gene>
    <name type="primary">PHYA3</name>
    <name type="synonym">PHY3</name>
</gene>
<comment type="function">
    <text>Regulatory photoreceptor which exists in two forms that are reversibly interconvertible by light: the Pr form that absorbs maximally in the red region of the spectrum and the Pfr form that absorbs maximally in the far-red region. Photoconversion of Pr to Pfr induces an array of morphogenic responses, whereas reconversion of Pfr to Pr cancels the induction of those responses. Pfr controls the expression of a number of nuclear genes including those encoding the small subunit of ribulose-bisphosphate carboxylase, chlorophyll A/B binding protein, protochlorophyllide reductase, rRNA, etc. It also controls the expression of its own gene(s) in a negative feedback fashion.</text>
</comment>
<comment type="subunit">
    <text>Homodimer.</text>
</comment>
<comment type="interaction">
    <interactant intactId="EBI-630413">
        <id>P06593</id>
    </interactant>
    <interactant intactId="EBI-300703">
        <id>Q43125</id>
        <label>CRY1</label>
    </interactant>
    <organismsDiffer>true</organismsDiffer>
    <experiments>2</experiments>
</comment>
<comment type="PTM">
    <text>Contains one covalently linked phytochromobilin chromophore.</text>
</comment>
<comment type="similarity">
    <text evidence="5">Belongs to the phytochrome family.</text>
</comment>
<dbReference type="EMBL" id="X03242">
    <property type="protein sequence ID" value="CAA26999.1"/>
    <property type="molecule type" value="mRNA"/>
</dbReference>
<dbReference type="EMBL" id="M18822">
    <property type="protein sequence ID" value="AAA76820.1"/>
    <property type="molecule type" value="Genomic_DNA"/>
</dbReference>
<dbReference type="PIR" id="A29631">
    <property type="entry name" value="A29631"/>
</dbReference>
<dbReference type="SMR" id="P06593"/>
<dbReference type="IntAct" id="P06593">
    <property type="interactions" value="2"/>
</dbReference>
<dbReference type="iPTMnet" id="P06593"/>
<dbReference type="GO" id="GO:0000155">
    <property type="term" value="F:phosphorelay sensor kinase activity"/>
    <property type="evidence" value="ECO:0007669"/>
    <property type="project" value="InterPro"/>
</dbReference>
<dbReference type="GO" id="GO:0009881">
    <property type="term" value="F:photoreceptor activity"/>
    <property type="evidence" value="ECO:0007669"/>
    <property type="project" value="UniProtKB-KW"/>
</dbReference>
<dbReference type="GO" id="GO:0042803">
    <property type="term" value="F:protein homodimerization activity"/>
    <property type="evidence" value="ECO:0007669"/>
    <property type="project" value="InterPro"/>
</dbReference>
<dbReference type="GO" id="GO:0009584">
    <property type="term" value="P:detection of visible light"/>
    <property type="evidence" value="ECO:0007669"/>
    <property type="project" value="InterPro"/>
</dbReference>
<dbReference type="GO" id="GO:0009585">
    <property type="term" value="P:red, far-red light phototransduction"/>
    <property type="evidence" value="ECO:0007669"/>
    <property type="project" value="InterPro"/>
</dbReference>
<dbReference type="GO" id="GO:0006355">
    <property type="term" value="P:regulation of DNA-templated transcription"/>
    <property type="evidence" value="ECO:0007669"/>
    <property type="project" value="InterPro"/>
</dbReference>
<dbReference type="CDD" id="cd16932">
    <property type="entry name" value="HATPase_Phy-like"/>
    <property type="match status" value="1"/>
</dbReference>
<dbReference type="CDD" id="cd00082">
    <property type="entry name" value="HisKA"/>
    <property type="match status" value="1"/>
</dbReference>
<dbReference type="CDD" id="cd00130">
    <property type="entry name" value="PAS"/>
    <property type="match status" value="2"/>
</dbReference>
<dbReference type="FunFam" id="3.30.450.270:FF:000001">
    <property type="entry name" value="Phytochrome"/>
    <property type="match status" value="1"/>
</dbReference>
<dbReference type="Gene3D" id="3.30.450.270">
    <property type="match status" value="1"/>
</dbReference>
<dbReference type="Gene3D" id="3.30.450.40">
    <property type="match status" value="1"/>
</dbReference>
<dbReference type="Gene3D" id="3.30.565.10">
    <property type="entry name" value="Histidine kinase-like ATPase, C-terminal domain"/>
    <property type="match status" value="1"/>
</dbReference>
<dbReference type="Gene3D" id="3.30.450.20">
    <property type="entry name" value="PAS domain"/>
    <property type="match status" value="3"/>
</dbReference>
<dbReference type="InterPro" id="IPR003018">
    <property type="entry name" value="GAF"/>
</dbReference>
<dbReference type="InterPro" id="IPR029016">
    <property type="entry name" value="GAF-like_dom_sf"/>
</dbReference>
<dbReference type="InterPro" id="IPR036890">
    <property type="entry name" value="HATPase_C_sf"/>
</dbReference>
<dbReference type="InterPro" id="IPR005467">
    <property type="entry name" value="His_kinase_dom"/>
</dbReference>
<dbReference type="InterPro" id="IPR003661">
    <property type="entry name" value="HisK_dim/P_dom"/>
</dbReference>
<dbReference type="InterPro" id="IPR000014">
    <property type="entry name" value="PAS"/>
</dbReference>
<dbReference type="InterPro" id="IPR035965">
    <property type="entry name" value="PAS-like_dom_sf"/>
</dbReference>
<dbReference type="InterPro" id="IPR013654">
    <property type="entry name" value="PAS_2"/>
</dbReference>
<dbReference type="InterPro" id="IPR013767">
    <property type="entry name" value="PAS_fold"/>
</dbReference>
<dbReference type="InterPro" id="IPR044767">
    <property type="entry name" value="Phy_HATPase-like"/>
</dbReference>
<dbReference type="InterPro" id="IPR016132">
    <property type="entry name" value="Phyto_chromo_attachment"/>
</dbReference>
<dbReference type="InterPro" id="IPR013516">
    <property type="entry name" value="Phyto_chromo_BS"/>
</dbReference>
<dbReference type="InterPro" id="IPR001294">
    <property type="entry name" value="Phytochrome"/>
</dbReference>
<dbReference type="InterPro" id="IPR012129">
    <property type="entry name" value="Phytochrome_A-E"/>
</dbReference>
<dbReference type="InterPro" id="IPR013515">
    <property type="entry name" value="Phytochrome_cen-reg"/>
</dbReference>
<dbReference type="InterPro" id="IPR043150">
    <property type="entry name" value="Phytochrome_PHY_sf"/>
</dbReference>
<dbReference type="NCBIfam" id="TIGR00229">
    <property type="entry name" value="sensory_box"/>
    <property type="match status" value="1"/>
</dbReference>
<dbReference type="PANTHER" id="PTHR47876">
    <property type="entry name" value="OS08G0260000 PROTEIN"/>
    <property type="match status" value="1"/>
</dbReference>
<dbReference type="PANTHER" id="PTHR47876:SF3">
    <property type="entry name" value="PHYTOCHROME 1"/>
    <property type="match status" value="1"/>
</dbReference>
<dbReference type="Pfam" id="PF01590">
    <property type="entry name" value="GAF"/>
    <property type="match status" value="1"/>
</dbReference>
<dbReference type="Pfam" id="PF02518">
    <property type="entry name" value="HATPase_c"/>
    <property type="match status" value="1"/>
</dbReference>
<dbReference type="Pfam" id="PF00512">
    <property type="entry name" value="HisKA"/>
    <property type="match status" value="1"/>
</dbReference>
<dbReference type="Pfam" id="PF00989">
    <property type="entry name" value="PAS"/>
    <property type="match status" value="2"/>
</dbReference>
<dbReference type="Pfam" id="PF08446">
    <property type="entry name" value="PAS_2"/>
    <property type="match status" value="1"/>
</dbReference>
<dbReference type="Pfam" id="PF00360">
    <property type="entry name" value="PHY"/>
    <property type="match status" value="1"/>
</dbReference>
<dbReference type="PIRSF" id="PIRSF000084">
    <property type="entry name" value="Phytochrome"/>
    <property type="match status" value="1"/>
</dbReference>
<dbReference type="PRINTS" id="PR01033">
    <property type="entry name" value="PHYTOCHROME"/>
</dbReference>
<dbReference type="SMART" id="SM00065">
    <property type="entry name" value="GAF"/>
    <property type="match status" value="1"/>
</dbReference>
<dbReference type="SMART" id="SM00387">
    <property type="entry name" value="HATPase_c"/>
    <property type="match status" value="1"/>
</dbReference>
<dbReference type="SMART" id="SM00388">
    <property type="entry name" value="HisKA"/>
    <property type="match status" value="1"/>
</dbReference>
<dbReference type="SMART" id="SM00091">
    <property type="entry name" value="PAS"/>
    <property type="match status" value="2"/>
</dbReference>
<dbReference type="SUPFAM" id="SSF55874">
    <property type="entry name" value="ATPase domain of HSP90 chaperone/DNA topoisomerase II/histidine kinase"/>
    <property type="match status" value="1"/>
</dbReference>
<dbReference type="SUPFAM" id="SSF55781">
    <property type="entry name" value="GAF domain-like"/>
    <property type="match status" value="2"/>
</dbReference>
<dbReference type="SUPFAM" id="SSF55785">
    <property type="entry name" value="PYP-like sensor domain (PAS domain)"/>
    <property type="match status" value="3"/>
</dbReference>
<dbReference type="PROSITE" id="PS50109">
    <property type="entry name" value="HIS_KIN"/>
    <property type="match status" value="1"/>
</dbReference>
<dbReference type="PROSITE" id="PS50112">
    <property type="entry name" value="PAS"/>
    <property type="match status" value="2"/>
</dbReference>
<dbReference type="PROSITE" id="PS00245">
    <property type="entry name" value="PHYTOCHROME_1"/>
    <property type="match status" value="1"/>
</dbReference>
<dbReference type="PROSITE" id="PS50046">
    <property type="entry name" value="PHYTOCHROME_2"/>
    <property type="match status" value="1"/>
</dbReference>
<protein>
    <recommendedName>
        <fullName>Phytochrome A type 3</fullName>
        <shortName>AP3</shortName>
    </recommendedName>
</protein>
<sequence>MSSSRPASSSSSRNRQSSQARVLAQTTLDAELNAEYEESGDSFDYSKLVEAQRDGPPVQQGRSEKVIAYLQHIQKGKLIQTFGCLLALDEKSFNVIAFSENAPEMLTTVSHAVPSVDDPPRLGIGTNVRSLFSDQGATALHKALGFADVSLLNPILVQCKTSGKPFYAIVHRATGCLVVDFEPVKPTEFPATAAGALQSYKLAAKAISKIQSLPGGSMEVLCNTVVKEVFDLTGYDRVMAYKFHEDDHGEVFSEITKPGLEPYLGLHYPATDIPQAARLLFMKNKVRMICDCRARSIKVIEAEALPFDISLCGSALRAPHSCHLQYMENMNSIASLVMAVVVNENEEDDEAESEQPAQQQKKKKLWGLLVCHHESPRYVPFPLRYACEFLAQVFAVHVNREFELEKQLREKNILKMQTMLSDMLFREASPLTIVSGTPNIMDLVKCDGAALLYGGKVWRLRNAPTESQIHDIAFWLSDVHRDSTGLSTDSLHDAGYPGAAALGDMICGMAVAKINSKDILFWFRSHTAAEIRWGGAKNDPSDMDDSRRMHPRLSFKAFLEVVKMKSLPWSDYEMDAIHSLQLILRGTLNDASKPKREASLDNQIGDLKLDGLAELQAVTSEMVRLMETATVPILAVDGNGLVNGWNQKAAELTGLRVDDAIGRHILTLVEDSSVPVVQRMLYLALQGKEEKEVRFEVKTHGPKRDDGPVILVVNACASRDLHDHVVGVCFVAQDMTVHKLVMDKFTRVEGDYKAIIHNPNPLIPPIFGADEFGWCSEWNAAMTKLTGWNRDEVLDKMLLGEVFDSSNASCPLKNRDAFVSLCVLINSALAGEETEKAPFGFFDRSGKYIECLLSANRKENEGGLITGVFCFIHVASHELQHALQVQQASEQTSLKRLKAFSYMRHAINNPLSGMLYSRKALKNTDLNEEQMKQIHVGDNCHHQINKILADLDQDSITEKSSCLDLEMAEFLLQDVVVAAVSQVLITCQGKGIRISCNLPERFMKQSVYGDGVRLQQILSDFLFISVKFSPVGGSVEISSKLTKNSIGENLHLIDLELRIKHQGLGVPAELMAQMFEEDNKEQSEEGLSLLVSRNLLRLMNGDVRHLREAGVSTFIITAELASAPTAMGQ</sequence>
<evidence type="ECO:0000255" key="1">
    <source>
        <dbReference type="PROSITE-ProRule" id="PRU00107"/>
    </source>
</evidence>
<evidence type="ECO:0000255" key="2">
    <source>
        <dbReference type="PROSITE-ProRule" id="PRU00140"/>
    </source>
</evidence>
<evidence type="ECO:0000256" key="3">
    <source>
        <dbReference type="SAM" id="MobiDB-lite"/>
    </source>
</evidence>
<evidence type="ECO:0000269" key="4">
    <source ref="3"/>
</evidence>
<evidence type="ECO:0000305" key="5"/>
<name>PHYA3_AVESA</name>
<keyword id="KW-0157">Chromophore</keyword>
<keyword id="KW-0903">Direct protein sequencing</keyword>
<keyword id="KW-0600">Photoreceptor protein</keyword>
<keyword id="KW-0675">Receptor</keyword>
<keyword id="KW-0677">Repeat</keyword>
<keyword id="KW-0716">Sensory transduction</keyword>
<keyword id="KW-0804">Transcription</keyword>
<keyword id="KW-0805">Transcription regulation</keyword>
<organism>
    <name type="scientific">Avena sativa</name>
    <name type="common">Oat</name>
    <dbReference type="NCBI Taxonomy" id="4498"/>
    <lineage>
        <taxon>Eukaryota</taxon>
        <taxon>Viridiplantae</taxon>
        <taxon>Streptophyta</taxon>
        <taxon>Embryophyta</taxon>
        <taxon>Tracheophyta</taxon>
        <taxon>Spermatophyta</taxon>
        <taxon>Magnoliopsida</taxon>
        <taxon>Liliopsida</taxon>
        <taxon>Poales</taxon>
        <taxon>Poaceae</taxon>
        <taxon>BOP clade</taxon>
        <taxon>Pooideae</taxon>
        <taxon>Poodae</taxon>
        <taxon>Poeae</taxon>
        <taxon>Poeae Chloroplast Group 1 (Aveneae type)</taxon>
        <taxon>Aveninae</taxon>
        <taxon>Avena</taxon>
    </lineage>
</organism>
<reference key="1">
    <citation type="journal article" date="1985" name="Nucleic Acids Res.">
        <title>Analysis of cloned cDNA and genomic sequences for phytochrome: complete amino acid sequences for two gene products expressed in etiolated Avena.</title>
        <authorList>
            <person name="Hershey H.P."/>
            <person name="Barker R.F."/>
            <person name="Idler K.B."/>
            <person name="Lissemore J.L."/>
            <person name="Quail P.H."/>
        </authorList>
    </citation>
    <scope>NUCLEOTIDE SEQUENCE [MRNA]</scope>
</reference>
<reference key="2">
    <citation type="journal article" date="1987" name="Gene">
        <title>Nucleotide sequence and characterization of a gene encoding the phytochrome polypeptide from Avena.</title>
        <authorList>
            <person name="Hershey H.P."/>
            <person name="Barker R.F."/>
            <person name="Idler K.B."/>
            <person name="Murray M.G."/>
            <person name="Quail P.H."/>
        </authorList>
    </citation>
    <scope>NUCLEOTIDE SEQUENCE [GENOMIC DNA]</scope>
</reference>
<reference key="3">
    <citation type="journal article" date="1988" name="FEBS Lett.">
        <title>The amino-terminal structure of oat phytochrome.</title>
        <authorList>
            <person name="Grimm R."/>
            <person name="Kellermann J."/>
            <person name="Schaefer W."/>
            <person name="Ruediger W."/>
        </authorList>
    </citation>
    <scope>PROTEIN SEQUENCE OF 2-13</scope>
</reference>